<sequence length="245" mass="28053">MAKIVILFDFDRTLIDGDSDNWVVTEMGLTEIFHQLRFTLPWNRLMDRMMMELQSQGRSIDDIKSCLKKMPIDSHIIEAIKSAKSSGCDLKIVSDANQFFIEKILEHHDLVDCFSEIYTNPTSLDDNGNLRILPYHSDALPPHSCNLCPSNLCKGLVMDHLRASSSNDQIPRRFIYLGDGGGDFCPTLKLRECDFVMPRTNYPLWKKISDNPLLIKAEVKEWSSAEEQQRILLQLVSTITKEEDS</sequence>
<proteinExistence type="evidence at protein level"/>
<keyword id="KW-0378">Hydrolase</keyword>
<keyword id="KW-0460">Magnesium</keyword>
<keyword id="KW-0479">Metal-binding</keyword>
<keyword id="KW-1185">Reference proteome</keyword>
<reference key="1">
    <citation type="journal article" date="1999" name="Nature">
        <title>Sequence and analysis of chromosome 4 of the plant Arabidopsis thaliana.</title>
        <authorList>
            <person name="Mayer K.F.X."/>
            <person name="Schueller C."/>
            <person name="Wambutt R."/>
            <person name="Murphy G."/>
            <person name="Volckaert G."/>
            <person name="Pohl T."/>
            <person name="Duesterhoeft A."/>
            <person name="Stiekema W."/>
            <person name="Entian K.-D."/>
            <person name="Terryn N."/>
            <person name="Harris B."/>
            <person name="Ansorge W."/>
            <person name="Brandt P."/>
            <person name="Grivell L.A."/>
            <person name="Rieger M."/>
            <person name="Weichselgartner M."/>
            <person name="de Simone V."/>
            <person name="Obermaier B."/>
            <person name="Mache R."/>
            <person name="Mueller M."/>
            <person name="Kreis M."/>
            <person name="Delseny M."/>
            <person name="Puigdomenech P."/>
            <person name="Watson M."/>
            <person name="Schmidtheini T."/>
            <person name="Reichert B."/>
            <person name="Portetelle D."/>
            <person name="Perez-Alonso M."/>
            <person name="Boutry M."/>
            <person name="Bancroft I."/>
            <person name="Vos P."/>
            <person name="Hoheisel J."/>
            <person name="Zimmermann W."/>
            <person name="Wedler H."/>
            <person name="Ridley P."/>
            <person name="Langham S.-A."/>
            <person name="McCullagh B."/>
            <person name="Bilham L."/>
            <person name="Robben J."/>
            <person name="van der Schueren J."/>
            <person name="Grymonprez B."/>
            <person name="Chuang Y.-J."/>
            <person name="Vandenbussche F."/>
            <person name="Braeken M."/>
            <person name="Weltjens I."/>
            <person name="Voet M."/>
            <person name="Bastiaens I."/>
            <person name="Aert R."/>
            <person name="Defoor E."/>
            <person name="Weitzenegger T."/>
            <person name="Bothe G."/>
            <person name="Ramsperger U."/>
            <person name="Hilbert H."/>
            <person name="Braun M."/>
            <person name="Holzer E."/>
            <person name="Brandt A."/>
            <person name="Peters S."/>
            <person name="van Staveren M."/>
            <person name="Dirkse W."/>
            <person name="Mooijman P."/>
            <person name="Klein Lankhorst R."/>
            <person name="Rose M."/>
            <person name="Hauf J."/>
            <person name="Koetter P."/>
            <person name="Berneiser S."/>
            <person name="Hempel S."/>
            <person name="Feldpausch M."/>
            <person name="Lamberth S."/>
            <person name="Van den Daele H."/>
            <person name="De Keyser A."/>
            <person name="Buysshaert C."/>
            <person name="Gielen J."/>
            <person name="Villarroel R."/>
            <person name="De Clercq R."/>
            <person name="van Montagu M."/>
            <person name="Rogers J."/>
            <person name="Cronin A."/>
            <person name="Quail M.A."/>
            <person name="Bray-Allen S."/>
            <person name="Clark L."/>
            <person name="Doggett J."/>
            <person name="Hall S."/>
            <person name="Kay M."/>
            <person name="Lennard N."/>
            <person name="McLay K."/>
            <person name="Mayes R."/>
            <person name="Pettett A."/>
            <person name="Rajandream M.A."/>
            <person name="Lyne M."/>
            <person name="Benes V."/>
            <person name="Rechmann S."/>
            <person name="Borkova D."/>
            <person name="Bloecker H."/>
            <person name="Scharfe M."/>
            <person name="Grimm M."/>
            <person name="Loehnert T.-H."/>
            <person name="Dose S."/>
            <person name="de Haan M."/>
            <person name="Maarse A.C."/>
            <person name="Schaefer M."/>
            <person name="Mueller-Auer S."/>
            <person name="Gabel C."/>
            <person name="Fuchs M."/>
            <person name="Fartmann B."/>
            <person name="Granderath K."/>
            <person name="Dauner D."/>
            <person name="Herzl A."/>
            <person name="Neumann S."/>
            <person name="Argiriou A."/>
            <person name="Vitale D."/>
            <person name="Liguori R."/>
            <person name="Piravandi E."/>
            <person name="Massenet O."/>
            <person name="Quigley F."/>
            <person name="Clabauld G."/>
            <person name="Muendlein A."/>
            <person name="Felber R."/>
            <person name="Schnabl S."/>
            <person name="Hiller R."/>
            <person name="Schmidt W."/>
            <person name="Lecharny A."/>
            <person name="Aubourg S."/>
            <person name="Chefdor F."/>
            <person name="Cooke R."/>
            <person name="Berger C."/>
            <person name="Monfort A."/>
            <person name="Casacuberta E."/>
            <person name="Gibbons T."/>
            <person name="Weber N."/>
            <person name="Vandenbol M."/>
            <person name="Bargues M."/>
            <person name="Terol J."/>
            <person name="Torres A."/>
            <person name="Perez-Perez A."/>
            <person name="Purnelle B."/>
            <person name="Bent E."/>
            <person name="Johnson S."/>
            <person name="Tacon D."/>
            <person name="Jesse T."/>
            <person name="Heijnen L."/>
            <person name="Schwarz S."/>
            <person name="Scholler P."/>
            <person name="Heber S."/>
            <person name="Francs P."/>
            <person name="Bielke C."/>
            <person name="Frishman D."/>
            <person name="Haase D."/>
            <person name="Lemcke K."/>
            <person name="Mewes H.-W."/>
            <person name="Stocker S."/>
            <person name="Zaccaria P."/>
            <person name="Bevan M."/>
            <person name="Wilson R.K."/>
            <person name="de la Bastide M."/>
            <person name="Habermann K."/>
            <person name="Parnell L."/>
            <person name="Dedhia N."/>
            <person name="Gnoj L."/>
            <person name="Schutz K."/>
            <person name="Huang E."/>
            <person name="Spiegel L."/>
            <person name="Sekhon M."/>
            <person name="Murray J."/>
            <person name="Sheet P."/>
            <person name="Cordes M."/>
            <person name="Abu-Threideh J."/>
            <person name="Stoneking T."/>
            <person name="Kalicki J."/>
            <person name="Graves T."/>
            <person name="Harmon G."/>
            <person name="Edwards J."/>
            <person name="Latreille P."/>
            <person name="Courtney L."/>
            <person name="Cloud J."/>
            <person name="Abbott A."/>
            <person name="Scott K."/>
            <person name="Johnson D."/>
            <person name="Minx P."/>
            <person name="Bentley D."/>
            <person name="Fulton B."/>
            <person name="Miller N."/>
            <person name="Greco T."/>
            <person name="Kemp K."/>
            <person name="Kramer J."/>
            <person name="Fulton L."/>
            <person name="Mardis E."/>
            <person name="Dante M."/>
            <person name="Pepin K."/>
            <person name="Hillier L.W."/>
            <person name="Nelson J."/>
            <person name="Spieth J."/>
            <person name="Ryan E."/>
            <person name="Andrews S."/>
            <person name="Geisel C."/>
            <person name="Layman D."/>
            <person name="Du H."/>
            <person name="Ali J."/>
            <person name="Berghoff A."/>
            <person name="Jones K."/>
            <person name="Drone K."/>
            <person name="Cotton M."/>
            <person name="Joshu C."/>
            <person name="Antonoiu B."/>
            <person name="Zidanic M."/>
            <person name="Strong C."/>
            <person name="Sun H."/>
            <person name="Lamar B."/>
            <person name="Yordan C."/>
            <person name="Ma P."/>
            <person name="Zhong J."/>
            <person name="Preston R."/>
            <person name="Vil D."/>
            <person name="Shekher M."/>
            <person name="Matero A."/>
            <person name="Shah R."/>
            <person name="Swaby I.K."/>
            <person name="O'Shaughnessy A."/>
            <person name="Rodriguez M."/>
            <person name="Hoffman J."/>
            <person name="Till S."/>
            <person name="Granat S."/>
            <person name="Shohdy N."/>
            <person name="Hasegawa A."/>
            <person name="Hameed A."/>
            <person name="Lodhi M."/>
            <person name="Johnson A."/>
            <person name="Chen E."/>
            <person name="Marra M.A."/>
            <person name="Martienssen R."/>
            <person name="McCombie W.R."/>
        </authorList>
    </citation>
    <scope>NUCLEOTIDE SEQUENCE [LARGE SCALE GENOMIC DNA]</scope>
    <source>
        <strain>cv. Columbia</strain>
    </source>
</reference>
<reference key="2">
    <citation type="journal article" date="2017" name="Plant J.">
        <title>Araport11: a complete reannotation of the Arabidopsis thaliana reference genome.</title>
        <authorList>
            <person name="Cheng C.Y."/>
            <person name="Krishnakumar V."/>
            <person name="Chan A.P."/>
            <person name="Thibaud-Nissen F."/>
            <person name="Schobel S."/>
            <person name="Town C.D."/>
        </authorList>
    </citation>
    <scope>GENOME REANNOTATION</scope>
    <source>
        <strain>cv. Columbia</strain>
    </source>
</reference>
<reference key="3">
    <citation type="journal article" date="2003" name="Science">
        <title>Empirical analysis of transcriptional activity in the Arabidopsis genome.</title>
        <authorList>
            <person name="Yamada K."/>
            <person name="Lim J."/>
            <person name="Dale J.M."/>
            <person name="Chen H."/>
            <person name="Shinn P."/>
            <person name="Palm C.J."/>
            <person name="Southwick A.M."/>
            <person name="Wu H.C."/>
            <person name="Kim C.J."/>
            <person name="Nguyen M."/>
            <person name="Pham P.K."/>
            <person name="Cheuk R.F."/>
            <person name="Karlin-Newmann G."/>
            <person name="Liu S.X."/>
            <person name="Lam B."/>
            <person name="Sakano H."/>
            <person name="Wu T."/>
            <person name="Yu G."/>
            <person name="Miranda M."/>
            <person name="Quach H.L."/>
            <person name="Tripp M."/>
            <person name="Chang C.H."/>
            <person name="Lee J.M."/>
            <person name="Toriumi M.J."/>
            <person name="Chan M.M."/>
            <person name="Tang C.C."/>
            <person name="Onodera C.S."/>
            <person name="Deng J.M."/>
            <person name="Akiyama K."/>
            <person name="Ansari Y."/>
            <person name="Arakawa T."/>
            <person name="Banh J."/>
            <person name="Banno F."/>
            <person name="Bowser L."/>
            <person name="Brooks S.Y."/>
            <person name="Carninci P."/>
            <person name="Chao Q."/>
            <person name="Choy N."/>
            <person name="Enju A."/>
            <person name="Goldsmith A.D."/>
            <person name="Gurjal M."/>
            <person name="Hansen N.F."/>
            <person name="Hayashizaki Y."/>
            <person name="Johnson-Hopson C."/>
            <person name="Hsuan V.W."/>
            <person name="Iida K."/>
            <person name="Karnes M."/>
            <person name="Khan S."/>
            <person name="Koesema E."/>
            <person name="Ishida J."/>
            <person name="Jiang P.X."/>
            <person name="Jones T."/>
            <person name="Kawai J."/>
            <person name="Kamiya A."/>
            <person name="Meyers C."/>
            <person name="Nakajima M."/>
            <person name="Narusaka M."/>
            <person name="Seki M."/>
            <person name="Sakurai T."/>
            <person name="Satou M."/>
            <person name="Tamse R."/>
            <person name="Vaysberg M."/>
            <person name="Wallender E.K."/>
            <person name="Wong C."/>
            <person name="Yamamura Y."/>
            <person name="Yuan S."/>
            <person name="Shinozaki K."/>
            <person name="Davis R.W."/>
            <person name="Theologis A."/>
            <person name="Ecker J.R."/>
        </authorList>
    </citation>
    <scope>NUCLEOTIDE SEQUENCE [LARGE SCALE MRNA]</scope>
    <source>
        <strain>cv. Columbia</strain>
    </source>
</reference>
<reference key="4">
    <citation type="submission" date="2006-07" db="EMBL/GenBank/DDBJ databases">
        <title>Large-scale analysis of RIKEN Arabidopsis full-length (RAFL) cDNAs.</title>
        <authorList>
            <person name="Totoki Y."/>
            <person name="Seki M."/>
            <person name="Ishida J."/>
            <person name="Nakajima M."/>
            <person name="Enju A."/>
            <person name="Kamiya A."/>
            <person name="Narusaka M."/>
            <person name="Shin-i T."/>
            <person name="Nakagawa M."/>
            <person name="Sakamoto N."/>
            <person name="Oishi K."/>
            <person name="Kohara Y."/>
            <person name="Kobayashi M."/>
            <person name="Toyoda A."/>
            <person name="Sakaki Y."/>
            <person name="Sakurai T."/>
            <person name="Iida K."/>
            <person name="Akiyama K."/>
            <person name="Satou M."/>
            <person name="Toyoda T."/>
            <person name="Konagaya A."/>
            <person name="Carninci P."/>
            <person name="Kawai J."/>
            <person name="Hayashizaki Y."/>
            <person name="Shinozaki K."/>
        </authorList>
    </citation>
    <scope>NUCLEOTIDE SEQUENCE [LARGE SCALE MRNA]</scope>
    <source>
        <strain>cv. Columbia</strain>
    </source>
</reference>
<reference key="5">
    <citation type="journal article" date="2016" name="Biochem. J.">
        <title>Bacterial and plant HAD enzymes catalyse a missing phosphatase step in thiamin diphosphate biosynthesis.</title>
        <authorList>
            <person name="Hasnain G."/>
            <person name="Roje S."/>
            <person name="Sa N."/>
            <person name="Zallot R."/>
            <person name="Ziemak M.J."/>
            <person name="de Crecy-Lagard V."/>
            <person name="Gregory J.F. III"/>
            <person name="Hanson A.D."/>
        </authorList>
    </citation>
    <scope>FUNCTION</scope>
    <scope>CATALYTIC ACTIVITY</scope>
    <scope>DISRUPTION PHENOTYPE</scope>
    <scope>BIOPHYSICOCHEMICAL PROPERTIES</scope>
    <scope>SUBUNIT</scope>
</reference>
<reference key="6">
    <citation type="journal article" date="2016" name="Plant Cell">
        <title>Arabidopsis TH2 encodes the orphan enzyme thiamin monophosphate phosphatase.</title>
        <authorList>
            <person name="Mimura M."/>
            <person name="Zallot R."/>
            <person name="Niehaus T.D."/>
            <person name="Hasnain G."/>
            <person name="Gidda S.K."/>
            <person name="Nguyen T.N."/>
            <person name="Anderson E.M."/>
            <person name="Mullen R.T."/>
            <person name="Brown G."/>
            <person name="Yakunin A.F."/>
            <person name="de Crecy-Lagard V."/>
            <person name="Gregory J.F."/>
            <person name="McCarty D.R."/>
            <person name="Hanson A.D."/>
        </authorList>
    </citation>
    <scope>FUNCTION</scope>
</reference>
<feature type="chain" id="PRO_0000404258" description="Thiamine phosphate phosphatase-like protein">
    <location>
        <begin position="1"/>
        <end position="245"/>
    </location>
</feature>
<feature type="active site" description="Nucleophile" evidence="1">
    <location>
        <position position="9"/>
    </location>
</feature>
<feature type="active site" description="Proton donor" evidence="1">
    <location>
        <position position="11"/>
    </location>
</feature>
<feature type="binding site" evidence="1">
    <location>
        <position position="9"/>
    </location>
    <ligand>
        <name>Mg(2+)</name>
        <dbReference type="ChEBI" id="CHEBI:18420"/>
    </ligand>
</feature>
<feature type="binding site" evidence="1">
    <location>
        <position position="11"/>
    </location>
    <ligand>
        <name>Mg(2+)</name>
        <dbReference type="ChEBI" id="CHEBI:18420"/>
    </ligand>
</feature>
<feature type="binding site" evidence="1">
    <location>
        <position position="179"/>
    </location>
    <ligand>
        <name>Mg(2+)</name>
        <dbReference type="ChEBI" id="CHEBI:18420"/>
    </ligand>
</feature>
<gene>
    <name evidence="6" type="ordered locus">At4g29530</name>
    <name evidence="7" type="ORF">T16L4.40</name>
</gene>
<dbReference type="EC" id="3.1.3.100" evidence="2"/>
<dbReference type="EMBL" id="AL079344">
    <property type="protein sequence ID" value="CAB45313.1"/>
    <property type="molecule type" value="Genomic_DNA"/>
</dbReference>
<dbReference type="EMBL" id="AL161575">
    <property type="protein sequence ID" value="CAB79711.1"/>
    <property type="molecule type" value="Genomic_DNA"/>
</dbReference>
<dbReference type="EMBL" id="CP002687">
    <property type="protein sequence ID" value="AEE85640.1"/>
    <property type="molecule type" value="Genomic_DNA"/>
</dbReference>
<dbReference type="EMBL" id="BT006155">
    <property type="protein sequence ID" value="AAP04140.1"/>
    <property type="molecule type" value="mRNA"/>
</dbReference>
<dbReference type="EMBL" id="BT008523">
    <property type="protein sequence ID" value="AAP40350.1"/>
    <property type="molecule type" value="mRNA"/>
</dbReference>
<dbReference type="EMBL" id="AK229519">
    <property type="protein sequence ID" value="BAF01374.1"/>
    <property type="molecule type" value="mRNA"/>
</dbReference>
<dbReference type="PIR" id="T09916">
    <property type="entry name" value="T09916"/>
</dbReference>
<dbReference type="RefSeq" id="NP_194682.1">
    <property type="nucleotide sequence ID" value="NM_119098.3"/>
</dbReference>
<dbReference type="SMR" id="Q9SU92"/>
<dbReference type="FunCoup" id="Q9SU92">
    <property type="interactions" value="1785"/>
</dbReference>
<dbReference type="STRING" id="3702.Q9SU92"/>
<dbReference type="iPTMnet" id="Q9SU92"/>
<dbReference type="PaxDb" id="3702-AT4G29530.1"/>
<dbReference type="ProteomicsDB" id="225982"/>
<dbReference type="DNASU" id="829074"/>
<dbReference type="EnsemblPlants" id="AT4G29530.1">
    <property type="protein sequence ID" value="AT4G29530.1"/>
    <property type="gene ID" value="AT4G29530"/>
</dbReference>
<dbReference type="GeneID" id="829074"/>
<dbReference type="Gramene" id="AT4G29530.1">
    <property type="protein sequence ID" value="AT4G29530.1"/>
    <property type="gene ID" value="AT4G29530"/>
</dbReference>
<dbReference type="KEGG" id="ath:AT4G29530"/>
<dbReference type="Araport" id="AT4G29530"/>
<dbReference type="TAIR" id="AT4G29530"/>
<dbReference type="eggNOG" id="KOG3120">
    <property type="taxonomic scope" value="Eukaryota"/>
</dbReference>
<dbReference type="HOGENOM" id="CLU_068983_1_1_1"/>
<dbReference type="InParanoid" id="Q9SU92"/>
<dbReference type="OMA" id="ENMGLTH"/>
<dbReference type="PhylomeDB" id="Q9SU92"/>
<dbReference type="BioCyc" id="ARA:AT4G29530-MONOMER"/>
<dbReference type="BioCyc" id="MetaCyc:AT4G29530-MONOMER"/>
<dbReference type="PRO" id="PR:Q9SU92"/>
<dbReference type="Proteomes" id="UP000006548">
    <property type="component" value="Chromosome 4"/>
</dbReference>
<dbReference type="ExpressionAtlas" id="Q9SU92">
    <property type="expression patterns" value="baseline and differential"/>
</dbReference>
<dbReference type="GO" id="GO:0004427">
    <property type="term" value="F:inorganic diphosphate phosphatase activity"/>
    <property type="evidence" value="ECO:0000250"/>
    <property type="project" value="UniProtKB"/>
</dbReference>
<dbReference type="GO" id="GO:0046872">
    <property type="term" value="F:metal ion binding"/>
    <property type="evidence" value="ECO:0007669"/>
    <property type="project" value="UniProtKB-KW"/>
</dbReference>
<dbReference type="GO" id="GO:0052732">
    <property type="term" value="F:phosphoethanolamine phosphatase activity"/>
    <property type="evidence" value="ECO:0000314"/>
    <property type="project" value="TAIR"/>
</dbReference>
<dbReference type="GO" id="GO:0042131">
    <property type="term" value="F:thiamine phosphate phosphatase activity"/>
    <property type="evidence" value="ECO:0000314"/>
    <property type="project" value="TAIR"/>
</dbReference>
<dbReference type="GO" id="GO:0006580">
    <property type="term" value="P:ethanolamine metabolic process"/>
    <property type="evidence" value="ECO:0000314"/>
    <property type="project" value="TAIR"/>
</dbReference>
<dbReference type="GO" id="GO:0051262">
    <property type="term" value="P:protein tetramerization"/>
    <property type="evidence" value="ECO:0000250"/>
    <property type="project" value="UniProtKB"/>
</dbReference>
<dbReference type="GO" id="GO:0009229">
    <property type="term" value="P:thiamine diphosphate biosynthetic process"/>
    <property type="evidence" value="ECO:0000314"/>
    <property type="project" value="TAIR"/>
</dbReference>
<dbReference type="CDD" id="cd16418">
    <property type="entry name" value="HAD_Pase"/>
    <property type="match status" value="1"/>
</dbReference>
<dbReference type="FunFam" id="3.40.50.1000:FF:000338">
    <property type="entry name" value="Inorganic pyrophosphatase 2"/>
    <property type="match status" value="1"/>
</dbReference>
<dbReference type="Gene3D" id="3.40.50.1000">
    <property type="entry name" value="HAD superfamily/HAD-like"/>
    <property type="match status" value="1"/>
</dbReference>
<dbReference type="InterPro" id="IPR036412">
    <property type="entry name" value="HAD-like_sf"/>
</dbReference>
<dbReference type="InterPro" id="IPR006384">
    <property type="entry name" value="HAD_hydro_PyrdxlP_Pase-like"/>
</dbReference>
<dbReference type="InterPro" id="IPR023214">
    <property type="entry name" value="HAD_sf"/>
</dbReference>
<dbReference type="InterPro" id="IPR016965">
    <property type="entry name" value="Pase_PHOSPHO-typ"/>
</dbReference>
<dbReference type="NCBIfam" id="TIGR01489">
    <property type="entry name" value="DKMTPPase-SF"/>
    <property type="match status" value="1"/>
</dbReference>
<dbReference type="NCBIfam" id="TIGR01488">
    <property type="entry name" value="HAD-SF-IB"/>
    <property type="match status" value="1"/>
</dbReference>
<dbReference type="PANTHER" id="PTHR20889">
    <property type="entry name" value="PHOSPHATASE, ORPHAN 1, 2"/>
    <property type="match status" value="1"/>
</dbReference>
<dbReference type="PANTHER" id="PTHR20889:SF19">
    <property type="entry name" value="THIAMINE PHOSPHATE PHOSPHATASE-LIKE PROTEIN"/>
    <property type="match status" value="1"/>
</dbReference>
<dbReference type="Pfam" id="PF06888">
    <property type="entry name" value="Put_Phosphatase"/>
    <property type="match status" value="1"/>
</dbReference>
<dbReference type="PIRSF" id="PIRSF031051">
    <property type="entry name" value="PyrdxlP_Pase_PHOSPHO2"/>
    <property type="match status" value="1"/>
</dbReference>
<dbReference type="SUPFAM" id="SSF56784">
    <property type="entry name" value="HAD-like"/>
    <property type="match status" value="1"/>
</dbReference>
<protein>
    <recommendedName>
        <fullName evidence="4">Thiamine phosphate phosphatase-like protein</fullName>
        <ecNumber evidence="2">3.1.3.100</ecNumber>
    </recommendedName>
</protein>
<organism>
    <name type="scientific">Arabidopsis thaliana</name>
    <name type="common">Mouse-ear cress</name>
    <dbReference type="NCBI Taxonomy" id="3702"/>
    <lineage>
        <taxon>Eukaryota</taxon>
        <taxon>Viridiplantae</taxon>
        <taxon>Streptophyta</taxon>
        <taxon>Embryophyta</taxon>
        <taxon>Tracheophyta</taxon>
        <taxon>Spermatophyta</taxon>
        <taxon>Magnoliopsida</taxon>
        <taxon>eudicotyledons</taxon>
        <taxon>Gunneridae</taxon>
        <taxon>Pentapetalae</taxon>
        <taxon>rosids</taxon>
        <taxon>malvids</taxon>
        <taxon>Brassicales</taxon>
        <taxon>Brassicaceae</taxon>
        <taxon>Camelineae</taxon>
        <taxon>Arabidopsis</taxon>
    </lineage>
</organism>
<comment type="function">
    <text evidence="2 3">HAD-like hydrolase that has a thiamine monophosphate phosphatase activity in a heterologous system (PubMed:26537753). Does not contribute to thiamine monophosphate phosphatase activity in planta (PubMed:27677881).</text>
</comment>
<comment type="catalytic activity">
    <reaction evidence="2">
        <text>thiamine phosphate + H2O = thiamine + phosphate</text>
        <dbReference type="Rhea" id="RHEA:47948"/>
        <dbReference type="ChEBI" id="CHEBI:15377"/>
        <dbReference type="ChEBI" id="CHEBI:18385"/>
        <dbReference type="ChEBI" id="CHEBI:37575"/>
        <dbReference type="ChEBI" id="CHEBI:43474"/>
        <dbReference type="EC" id="3.1.3.100"/>
    </reaction>
</comment>
<comment type="cofactor">
    <cofactor evidence="1">
        <name>Mg(2+)</name>
        <dbReference type="ChEBI" id="CHEBI:18420"/>
    </cofactor>
</comment>
<comment type="biophysicochemical properties">
    <kinetics>
        <KM evidence="2">5.1 mM for thiamine monophosphate</KM>
        <text>kcat is 29.9 sec(-1) for thiamine monophosphate.</text>
    </kinetics>
</comment>
<comment type="subunit">
    <text evidence="2">Monomer.</text>
</comment>
<comment type="disruption phenotype">
    <text evidence="2">No visible phenotype.</text>
</comment>
<comment type="similarity">
    <text evidence="5">Belongs to the HAD-like hydrolase superfamily.</text>
</comment>
<accession>Q9SU92</accession>
<evidence type="ECO:0000250" key="1">
    <source>
        <dbReference type="UniProtKB" id="O33194"/>
    </source>
</evidence>
<evidence type="ECO:0000269" key="2">
    <source>
    </source>
</evidence>
<evidence type="ECO:0000269" key="3">
    <source>
    </source>
</evidence>
<evidence type="ECO:0000303" key="4">
    <source>
    </source>
</evidence>
<evidence type="ECO:0000305" key="5"/>
<evidence type="ECO:0000312" key="6">
    <source>
        <dbReference type="Araport" id="AT4G29530"/>
    </source>
</evidence>
<evidence type="ECO:0000312" key="7">
    <source>
        <dbReference type="EMBL" id="CAB45313.1"/>
    </source>
</evidence>
<name>PPSP3_ARATH</name>